<comment type="subcellular location">
    <subcellularLocation>
        <location evidence="2">Membrane</location>
        <topology evidence="2">Multi-pass membrane protein</topology>
    </subcellularLocation>
</comment>
<comment type="similarity">
    <text evidence="2">Belongs to the AIM11 family.</text>
</comment>
<reference key="1">
    <citation type="journal article" date="2004" name="Nature">
        <title>Genome evolution in yeasts.</title>
        <authorList>
            <person name="Dujon B."/>
            <person name="Sherman D."/>
            <person name="Fischer G."/>
            <person name="Durrens P."/>
            <person name="Casaregola S."/>
            <person name="Lafontaine I."/>
            <person name="de Montigny J."/>
            <person name="Marck C."/>
            <person name="Neuveglise C."/>
            <person name="Talla E."/>
            <person name="Goffard N."/>
            <person name="Frangeul L."/>
            <person name="Aigle M."/>
            <person name="Anthouard V."/>
            <person name="Babour A."/>
            <person name="Barbe V."/>
            <person name="Barnay S."/>
            <person name="Blanchin S."/>
            <person name="Beckerich J.-M."/>
            <person name="Beyne E."/>
            <person name="Bleykasten C."/>
            <person name="Boisrame A."/>
            <person name="Boyer J."/>
            <person name="Cattolico L."/>
            <person name="Confanioleri F."/>
            <person name="de Daruvar A."/>
            <person name="Despons L."/>
            <person name="Fabre E."/>
            <person name="Fairhead C."/>
            <person name="Ferry-Dumazet H."/>
            <person name="Groppi A."/>
            <person name="Hantraye F."/>
            <person name="Hennequin C."/>
            <person name="Jauniaux N."/>
            <person name="Joyet P."/>
            <person name="Kachouri R."/>
            <person name="Kerrest A."/>
            <person name="Koszul R."/>
            <person name="Lemaire M."/>
            <person name="Lesur I."/>
            <person name="Ma L."/>
            <person name="Muller H."/>
            <person name="Nicaud J.-M."/>
            <person name="Nikolski M."/>
            <person name="Oztas S."/>
            <person name="Ozier-Kalogeropoulos O."/>
            <person name="Pellenz S."/>
            <person name="Potier S."/>
            <person name="Richard G.-F."/>
            <person name="Straub M.-L."/>
            <person name="Suleau A."/>
            <person name="Swennen D."/>
            <person name="Tekaia F."/>
            <person name="Wesolowski-Louvel M."/>
            <person name="Westhof E."/>
            <person name="Wirth B."/>
            <person name="Zeniou-Meyer M."/>
            <person name="Zivanovic Y."/>
            <person name="Bolotin-Fukuhara M."/>
            <person name="Thierry A."/>
            <person name="Bouchier C."/>
            <person name="Caudron B."/>
            <person name="Scarpelli C."/>
            <person name="Gaillardin C."/>
            <person name="Weissenbach J."/>
            <person name="Wincker P."/>
            <person name="Souciet J.-L."/>
        </authorList>
    </citation>
    <scope>NUCLEOTIDE SEQUENCE [LARGE SCALE GENOMIC DNA]</scope>
    <source>
        <strain>ATCC 2001 / BCRC 20586 / JCM 3761 / NBRC 0622 / NRRL Y-65 / CBS 138</strain>
    </source>
</reference>
<protein>
    <recommendedName>
        <fullName>Altered inheritance of mitochondria protein 11</fullName>
    </recommendedName>
</protein>
<proteinExistence type="inferred from homology"/>
<organism>
    <name type="scientific">Candida glabrata (strain ATCC 2001 / BCRC 20586 / JCM 3761 / NBRC 0622 / NRRL Y-65 / CBS 138)</name>
    <name type="common">Yeast</name>
    <name type="synonym">Nakaseomyces glabratus</name>
    <dbReference type="NCBI Taxonomy" id="284593"/>
    <lineage>
        <taxon>Eukaryota</taxon>
        <taxon>Fungi</taxon>
        <taxon>Dikarya</taxon>
        <taxon>Ascomycota</taxon>
        <taxon>Saccharomycotina</taxon>
        <taxon>Saccharomycetes</taxon>
        <taxon>Saccharomycetales</taxon>
        <taxon>Saccharomycetaceae</taxon>
        <taxon>Nakaseomyces</taxon>
    </lineage>
</organism>
<evidence type="ECO:0000255" key="1"/>
<evidence type="ECO:0000305" key="2"/>
<gene>
    <name type="primary">AIM11</name>
    <name type="ordered locus">CAGL0I04928g</name>
</gene>
<keyword id="KW-0472">Membrane</keyword>
<keyword id="KW-1185">Reference proteome</keyword>
<keyword id="KW-0812">Transmembrane</keyword>
<keyword id="KW-1133">Transmembrane helix</keyword>
<sequence length="137" mass="15095">MTVPEIISDGKSTRRNLQKLLFFGATSATLAIAALTSRSIATRKYIPTFFQLNTKIPTFSSKSEAQAALGLSSGLSLGIFAITTTGFCWALDISSASDFKQRMKTLFNTIDEKEYMNDSDPETNKIIEELEALINKK</sequence>
<accession>Q6FQN0</accession>
<dbReference type="EMBL" id="CR380955">
    <property type="protein sequence ID" value="CAG60401.1"/>
    <property type="molecule type" value="Genomic_DNA"/>
</dbReference>
<dbReference type="RefSeq" id="XP_447464.1">
    <property type="nucleotide sequence ID" value="XM_447464.1"/>
</dbReference>
<dbReference type="FunCoup" id="Q6FQN0">
    <property type="interactions" value="34"/>
</dbReference>
<dbReference type="STRING" id="284593.Q6FQN0"/>
<dbReference type="EnsemblFungi" id="CAGL0I04928g-T">
    <property type="protein sequence ID" value="CAGL0I04928g-T-p1"/>
    <property type="gene ID" value="CAGL0I04928g"/>
</dbReference>
<dbReference type="KEGG" id="cgr:2889253"/>
<dbReference type="CGD" id="CAL0132242">
    <property type="gene designation" value="CAGL0I04928g"/>
</dbReference>
<dbReference type="VEuPathDB" id="FungiDB:CAGL0I04928g"/>
<dbReference type="eggNOG" id="ENOG502SAK0">
    <property type="taxonomic scope" value="Eukaryota"/>
</dbReference>
<dbReference type="HOGENOM" id="CLU_118700_0_0_1"/>
<dbReference type="InParanoid" id="Q6FQN0"/>
<dbReference type="OMA" id="RFAYKST"/>
<dbReference type="Proteomes" id="UP000002428">
    <property type="component" value="Chromosome I"/>
</dbReference>
<dbReference type="GO" id="GO:0016020">
    <property type="term" value="C:membrane"/>
    <property type="evidence" value="ECO:0007669"/>
    <property type="project" value="UniProtKB-SubCell"/>
</dbReference>
<dbReference type="GO" id="GO:0005739">
    <property type="term" value="C:mitochondrion"/>
    <property type="evidence" value="ECO:0007669"/>
    <property type="project" value="TreeGrafter"/>
</dbReference>
<dbReference type="InterPro" id="IPR038814">
    <property type="entry name" value="AIM11"/>
</dbReference>
<dbReference type="PANTHER" id="PTHR39136">
    <property type="entry name" value="ALTERED INHERITANCE OF MITOCHONDRIA PROTEIN 11"/>
    <property type="match status" value="1"/>
</dbReference>
<dbReference type="PANTHER" id="PTHR39136:SF1">
    <property type="entry name" value="ALTERED INHERITANCE OF MITOCHONDRIA PROTEIN 11"/>
    <property type="match status" value="1"/>
</dbReference>
<name>AIM11_CANGA</name>
<feature type="chain" id="PRO_0000405644" description="Altered inheritance of mitochondria protein 11">
    <location>
        <begin position="1"/>
        <end position="137"/>
    </location>
</feature>
<feature type="transmembrane region" description="Helical" evidence="1">
    <location>
        <begin position="20"/>
        <end position="42"/>
    </location>
</feature>
<feature type="transmembrane region" description="Helical" evidence="1">
    <location>
        <begin position="69"/>
        <end position="91"/>
    </location>
</feature>